<geneLocation type="mitochondrion"/>
<accession>Q9B5R3</accession>
<name>CYB_PHIMO</name>
<keyword id="KW-0249">Electron transport</keyword>
<keyword id="KW-0349">Heme</keyword>
<keyword id="KW-0408">Iron</keyword>
<keyword id="KW-0472">Membrane</keyword>
<keyword id="KW-0479">Metal-binding</keyword>
<keyword id="KW-0496">Mitochondrion</keyword>
<keyword id="KW-0999">Mitochondrion inner membrane</keyword>
<keyword id="KW-0679">Respiratory chain</keyword>
<keyword id="KW-0812">Transmembrane</keyword>
<keyword id="KW-1133">Transmembrane helix</keyword>
<keyword id="KW-0813">Transport</keyword>
<keyword id="KW-0830">Ubiquinone</keyword>
<reference key="1">
    <citation type="journal article" date="2001" name="Mol. Phylogenet. Evol.">
        <title>Retrieval of four adaptive lineages in duiker antelope: evidence from mitochondrial DNA sequences and fluorescence in situ hybridization.</title>
        <authorList>
            <person name="van Vuuren B.J."/>
            <person name="Robinson T.J."/>
        </authorList>
    </citation>
    <scope>NUCLEOTIDE SEQUENCE [GENOMIC DNA]</scope>
</reference>
<gene>
    <name type="primary">MT-CYB</name>
    <name type="synonym">COB</name>
    <name type="synonym">CYTB</name>
    <name type="synonym">MTCYB</name>
</gene>
<sequence>MTNIQKTHPLMKIVNNAFVDLPAPSNISSWWNFGSLLGICLILQILTGLFLAMHYTADTTTAFSSVTHICRDVNYGWIIRYMHANGASMFFICLFMHVGRGLYYGSYAFMETWNIGVILLFATMATAFMGYVLPWGQMSFWGATVITNLLSAIPYIGTNLVEWIWGGFSVDKATLTRFFAFHFIFPFIIAALAMVHLLFLHETGSNNPTGISSDADKIPFHPYYTIKDILGALLLILALMILVLFSPDLLGDPDNYTPANPLNTPPHIKPEWYFLFAYAILRSIPNKLGGVLALVLSILILVLMPLLHTSKQRSMMFRPISQCLFWILVADLLTLTWIGGQPVEHPYIIIGQLASIMYFLLILVLMPVASTIENNLLKW</sequence>
<evidence type="ECO:0000250" key="1"/>
<evidence type="ECO:0000250" key="2">
    <source>
        <dbReference type="UniProtKB" id="P00157"/>
    </source>
</evidence>
<evidence type="ECO:0000255" key="3">
    <source>
        <dbReference type="PROSITE-ProRule" id="PRU00967"/>
    </source>
</evidence>
<evidence type="ECO:0000255" key="4">
    <source>
        <dbReference type="PROSITE-ProRule" id="PRU00968"/>
    </source>
</evidence>
<proteinExistence type="inferred from homology"/>
<organism>
    <name type="scientific">Philantomba monticola</name>
    <name type="common">Blue duiker</name>
    <name type="synonym">Cephalophus monticola</name>
    <dbReference type="NCBI Taxonomy" id="907742"/>
    <lineage>
        <taxon>Eukaryota</taxon>
        <taxon>Metazoa</taxon>
        <taxon>Chordata</taxon>
        <taxon>Craniata</taxon>
        <taxon>Vertebrata</taxon>
        <taxon>Euteleostomi</taxon>
        <taxon>Mammalia</taxon>
        <taxon>Eutheria</taxon>
        <taxon>Laurasiatheria</taxon>
        <taxon>Artiodactyla</taxon>
        <taxon>Ruminantia</taxon>
        <taxon>Pecora</taxon>
        <taxon>Bovidae</taxon>
        <taxon>Cephalophinae</taxon>
        <taxon>Philantomba</taxon>
    </lineage>
</organism>
<protein>
    <recommendedName>
        <fullName>Cytochrome b</fullName>
    </recommendedName>
    <alternativeName>
        <fullName>Complex III subunit 3</fullName>
    </alternativeName>
    <alternativeName>
        <fullName>Complex III subunit III</fullName>
    </alternativeName>
    <alternativeName>
        <fullName>Cytochrome b-c1 complex subunit 3</fullName>
    </alternativeName>
    <alternativeName>
        <fullName>Ubiquinol-cytochrome-c reductase complex cytochrome b subunit</fullName>
    </alternativeName>
</protein>
<feature type="chain" id="PRO_0000060752" description="Cytochrome b">
    <location>
        <begin position="1"/>
        <end position="379"/>
    </location>
</feature>
<feature type="transmembrane region" description="Helical" evidence="2">
    <location>
        <begin position="33"/>
        <end position="53"/>
    </location>
</feature>
<feature type="transmembrane region" description="Helical" evidence="2">
    <location>
        <begin position="77"/>
        <end position="98"/>
    </location>
</feature>
<feature type="transmembrane region" description="Helical" evidence="2">
    <location>
        <begin position="113"/>
        <end position="133"/>
    </location>
</feature>
<feature type="transmembrane region" description="Helical" evidence="2">
    <location>
        <begin position="178"/>
        <end position="198"/>
    </location>
</feature>
<feature type="transmembrane region" description="Helical" evidence="2">
    <location>
        <begin position="226"/>
        <end position="246"/>
    </location>
</feature>
<feature type="transmembrane region" description="Helical" evidence="2">
    <location>
        <begin position="288"/>
        <end position="308"/>
    </location>
</feature>
<feature type="transmembrane region" description="Helical" evidence="2">
    <location>
        <begin position="320"/>
        <end position="340"/>
    </location>
</feature>
<feature type="transmembrane region" description="Helical" evidence="2">
    <location>
        <begin position="347"/>
        <end position="367"/>
    </location>
</feature>
<feature type="binding site" description="axial binding residue" evidence="2">
    <location>
        <position position="83"/>
    </location>
    <ligand>
        <name>heme b</name>
        <dbReference type="ChEBI" id="CHEBI:60344"/>
        <label>b562</label>
    </ligand>
    <ligandPart>
        <name>Fe</name>
        <dbReference type="ChEBI" id="CHEBI:18248"/>
    </ligandPart>
</feature>
<feature type="binding site" description="axial binding residue" evidence="2">
    <location>
        <position position="97"/>
    </location>
    <ligand>
        <name>heme b</name>
        <dbReference type="ChEBI" id="CHEBI:60344"/>
        <label>b566</label>
    </ligand>
    <ligandPart>
        <name>Fe</name>
        <dbReference type="ChEBI" id="CHEBI:18248"/>
    </ligandPart>
</feature>
<feature type="binding site" description="axial binding residue" evidence="2">
    <location>
        <position position="182"/>
    </location>
    <ligand>
        <name>heme b</name>
        <dbReference type="ChEBI" id="CHEBI:60344"/>
        <label>b562</label>
    </ligand>
    <ligandPart>
        <name>Fe</name>
        <dbReference type="ChEBI" id="CHEBI:18248"/>
    </ligandPart>
</feature>
<feature type="binding site" description="axial binding residue" evidence="2">
    <location>
        <position position="196"/>
    </location>
    <ligand>
        <name>heme b</name>
        <dbReference type="ChEBI" id="CHEBI:60344"/>
        <label>b566</label>
    </ligand>
    <ligandPart>
        <name>Fe</name>
        <dbReference type="ChEBI" id="CHEBI:18248"/>
    </ligandPart>
</feature>
<feature type="binding site" evidence="2">
    <location>
        <position position="201"/>
    </location>
    <ligand>
        <name>a ubiquinone</name>
        <dbReference type="ChEBI" id="CHEBI:16389"/>
    </ligand>
</feature>
<comment type="function">
    <text evidence="2">Component of the ubiquinol-cytochrome c reductase complex (complex III or cytochrome b-c1 complex) that is part of the mitochondrial respiratory chain. The b-c1 complex mediates electron transfer from ubiquinol to cytochrome c. Contributes to the generation of a proton gradient across the mitochondrial membrane that is then used for ATP synthesis.</text>
</comment>
<comment type="cofactor">
    <cofactor evidence="2">
        <name>heme b</name>
        <dbReference type="ChEBI" id="CHEBI:60344"/>
    </cofactor>
    <text evidence="2">Binds 2 heme b groups non-covalently.</text>
</comment>
<comment type="subunit">
    <text evidence="2">The cytochrome bc1 complex contains 11 subunits: 3 respiratory subunits (MT-CYB, CYC1 and UQCRFS1), 2 core proteins (UQCRC1 and UQCRC2) and 6 low-molecular weight proteins (UQCRH/QCR6, UQCRB/QCR7, UQCRQ/QCR8, UQCR10/QCR9, UQCR11/QCR10 and a cleavage product of UQCRFS1). This cytochrome bc1 complex then forms a dimer.</text>
</comment>
<comment type="subcellular location">
    <subcellularLocation>
        <location evidence="2">Mitochondrion inner membrane</location>
        <topology evidence="2">Multi-pass membrane protein</topology>
    </subcellularLocation>
</comment>
<comment type="miscellaneous">
    <text evidence="1">Heme 1 (or BL or b562) is low-potential and absorbs at about 562 nm, and heme 2 (or BH or b566) is high-potential and absorbs at about 566 nm.</text>
</comment>
<comment type="similarity">
    <text evidence="3 4">Belongs to the cytochrome b family.</text>
</comment>
<comment type="caution">
    <text evidence="2">The full-length protein contains only eight transmembrane helices, not nine as predicted by bioinformatics tools.</text>
</comment>
<dbReference type="EMBL" id="AF153893">
    <property type="protein sequence ID" value="AAK26681.1"/>
    <property type="molecule type" value="Genomic_DNA"/>
</dbReference>
<dbReference type="SMR" id="Q9B5R3"/>
<dbReference type="GO" id="GO:0005743">
    <property type="term" value="C:mitochondrial inner membrane"/>
    <property type="evidence" value="ECO:0007669"/>
    <property type="project" value="UniProtKB-SubCell"/>
</dbReference>
<dbReference type="GO" id="GO:0045275">
    <property type="term" value="C:respiratory chain complex III"/>
    <property type="evidence" value="ECO:0007669"/>
    <property type="project" value="InterPro"/>
</dbReference>
<dbReference type="GO" id="GO:0046872">
    <property type="term" value="F:metal ion binding"/>
    <property type="evidence" value="ECO:0007669"/>
    <property type="project" value="UniProtKB-KW"/>
</dbReference>
<dbReference type="GO" id="GO:0008121">
    <property type="term" value="F:ubiquinol-cytochrome-c reductase activity"/>
    <property type="evidence" value="ECO:0007669"/>
    <property type="project" value="InterPro"/>
</dbReference>
<dbReference type="GO" id="GO:0006122">
    <property type="term" value="P:mitochondrial electron transport, ubiquinol to cytochrome c"/>
    <property type="evidence" value="ECO:0007669"/>
    <property type="project" value="TreeGrafter"/>
</dbReference>
<dbReference type="CDD" id="cd00290">
    <property type="entry name" value="cytochrome_b_C"/>
    <property type="match status" value="1"/>
</dbReference>
<dbReference type="CDD" id="cd00284">
    <property type="entry name" value="Cytochrome_b_N"/>
    <property type="match status" value="1"/>
</dbReference>
<dbReference type="FunFam" id="1.20.810.10:FF:000002">
    <property type="entry name" value="Cytochrome b"/>
    <property type="match status" value="1"/>
</dbReference>
<dbReference type="Gene3D" id="1.20.810.10">
    <property type="entry name" value="Cytochrome Bc1 Complex, Chain C"/>
    <property type="match status" value="1"/>
</dbReference>
<dbReference type="InterPro" id="IPR005798">
    <property type="entry name" value="Cyt_b/b6_C"/>
</dbReference>
<dbReference type="InterPro" id="IPR036150">
    <property type="entry name" value="Cyt_b/b6_C_sf"/>
</dbReference>
<dbReference type="InterPro" id="IPR005797">
    <property type="entry name" value="Cyt_b/b6_N"/>
</dbReference>
<dbReference type="InterPro" id="IPR027387">
    <property type="entry name" value="Cytb/b6-like_sf"/>
</dbReference>
<dbReference type="InterPro" id="IPR030689">
    <property type="entry name" value="Cytochrome_b"/>
</dbReference>
<dbReference type="InterPro" id="IPR048260">
    <property type="entry name" value="Cytochrome_b_C_euk/bac"/>
</dbReference>
<dbReference type="InterPro" id="IPR048259">
    <property type="entry name" value="Cytochrome_b_N_euk/bac"/>
</dbReference>
<dbReference type="InterPro" id="IPR016174">
    <property type="entry name" value="Di-haem_cyt_TM"/>
</dbReference>
<dbReference type="PANTHER" id="PTHR19271">
    <property type="entry name" value="CYTOCHROME B"/>
    <property type="match status" value="1"/>
</dbReference>
<dbReference type="PANTHER" id="PTHR19271:SF16">
    <property type="entry name" value="CYTOCHROME B"/>
    <property type="match status" value="1"/>
</dbReference>
<dbReference type="Pfam" id="PF00032">
    <property type="entry name" value="Cytochrom_B_C"/>
    <property type="match status" value="1"/>
</dbReference>
<dbReference type="Pfam" id="PF00033">
    <property type="entry name" value="Cytochrome_B"/>
    <property type="match status" value="1"/>
</dbReference>
<dbReference type="PIRSF" id="PIRSF038885">
    <property type="entry name" value="COB"/>
    <property type="match status" value="1"/>
</dbReference>
<dbReference type="SUPFAM" id="SSF81648">
    <property type="entry name" value="a domain/subunit of cytochrome bc1 complex (Ubiquinol-cytochrome c reductase)"/>
    <property type="match status" value="1"/>
</dbReference>
<dbReference type="SUPFAM" id="SSF81342">
    <property type="entry name" value="Transmembrane di-heme cytochromes"/>
    <property type="match status" value="1"/>
</dbReference>
<dbReference type="PROSITE" id="PS51003">
    <property type="entry name" value="CYTB_CTER"/>
    <property type="match status" value="1"/>
</dbReference>
<dbReference type="PROSITE" id="PS51002">
    <property type="entry name" value="CYTB_NTER"/>
    <property type="match status" value="1"/>
</dbReference>